<gene>
    <name type="ordered locus">BCE33L4669</name>
</gene>
<name>Y4669_BACCZ</name>
<proteinExistence type="inferred from homology"/>
<feature type="chain" id="PRO_0000165884" description="UPF0349 protein BCE33L4669">
    <location>
        <begin position="1"/>
        <end position="79"/>
    </location>
</feature>
<organism>
    <name type="scientific">Bacillus cereus (strain ZK / E33L)</name>
    <dbReference type="NCBI Taxonomy" id="288681"/>
    <lineage>
        <taxon>Bacteria</taxon>
        <taxon>Bacillati</taxon>
        <taxon>Bacillota</taxon>
        <taxon>Bacilli</taxon>
        <taxon>Bacillales</taxon>
        <taxon>Bacillaceae</taxon>
        <taxon>Bacillus</taxon>
        <taxon>Bacillus cereus group</taxon>
    </lineage>
</organism>
<accession>Q632C6</accession>
<reference key="1">
    <citation type="journal article" date="2006" name="J. Bacteriol.">
        <title>Pathogenomic sequence analysis of Bacillus cereus and Bacillus thuringiensis isolates closely related to Bacillus anthracis.</title>
        <authorList>
            <person name="Han C.S."/>
            <person name="Xie G."/>
            <person name="Challacombe J.F."/>
            <person name="Altherr M.R."/>
            <person name="Bhotika S.S."/>
            <person name="Bruce D."/>
            <person name="Campbell C.S."/>
            <person name="Campbell M.L."/>
            <person name="Chen J."/>
            <person name="Chertkov O."/>
            <person name="Cleland C."/>
            <person name="Dimitrijevic M."/>
            <person name="Doggett N.A."/>
            <person name="Fawcett J.J."/>
            <person name="Glavina T."/>
            <person name="Goodwin L.A."/>
            <person name="Hill K.K."/>
            <person name="Hitchcock P."/>
            <person name="Jackson P.J."/>
            <person name="Keim P."/>
            <person name="Kewalramani A.R."/>
            <person name="Longmire J."/>
            <person name="Lucas S."/>
            <person name="Malfatti S."/>
            <person name="McMurry K."/>
            <person name="Meincke L.J."/>
            <person name="Misra M."/>
            <person name="Moseman B.L."/>
            <person name="Mundt M."/>
            <person name="Munk A.C."/>
            <person name="Okinaka R.T."/>
            <person name="Parson-Quintana B."/>
            <person name="Reilly L.P."/>
            <person name="Richardson P."/>
            <person name="Robinson D.L."/>
            <person name="Rubin E."/>
            <person name="Saunders E."/>
            <person name="Tapia R."/>
            <person name="Tesmer J.G."/>
            <person name="Thayer N."/>
            <person name="Thompson L.S."/>
            <person name="Tice H."/>
            <person name="Ticknor L.O."/>
            <person name="Wills P.L."/>
            <person name="Brettin T.S."/>
            <person name="Gilna P."/>
        </authorList>
    </citation>
    <scope>NUCLEOTIDE SEQUENCE [LARGE SCALE GENOMIC DNA]</scope>
    <source>
        <strain>ZK / E33L</strain>
    </source>
</reference>
<comment type="similarity">
    <text evidence="1">Belongs to the UPF0349 family.</text>
</comment>
<sequence length="79" mass="8670">MIKPLIEFCVGNLASGSQAALEKLEKDPNLDVMEYGCLGYCGICFEGPFALVNGEVVQGSTVEELVNNVYEYLDENPMF</sequence>
<evidence type="ECO:0000255" key="1">
    <source>
        <dbReference type="HAMAP-Rule" id="MF_01542"/>
    </source>
</evidence>
<dbReference type="EMBL" id="CP000001">
    <property type="protein sequence ID" value="AAU15606.1"/>
    <property type="molecule type" value="Genomic_DNA"/>
</dbReference>
<dbReference type="RefSeq" id="WP_000595027.1">
    <property type="nucleotide sequence ID" value="NZ_CP009968.1"/>
</dbReference>
<dbReference type="SMR" id="Q632C6"/>
<dbReference type="KEGG" id="bcz:BCE33L4669"/>
<dbReference type="PATRIC" id="fig|288681.22.peg.690"/>
<dbReference type="Proteomes" id="UP000002612">
    <property type="component" value="Chromosome"/>
</dbReference>
<dbReference type="HAMAP" id="MF_01542">
    <property type="entry name" value="UPF0349"/>
    <property type="match status" value="1"/>
</dbReference>
<dbReference type="InterPro" id="IPR009910">
    <property type="entry name" value="DUF1450"/>
</dbReference>
<dbReference type="InterPro" id="IPR022916">
    <property type="entry name" value="UPF0349"/>
</dbReference>
<dbReference type="NCBIfam" id="NF010190">
    <property type="entry name" value="PRK13669.1"/>
    <property type="match status" value="1"/>
</dbReference>
<dbReference type="Pfam" id="PF07293">
    <property type="entry name" value="DUF1450"/>
    <property type="match status" value="1"/>
</dbReference>
<protein>
    <recommendedName>
        <fullName evidence="1">UPF0349 protein BCE33L4669</fullName>
    </recommendedName>
</protein>